<sequence>MAELPHRIIKETQRLLAEPVPGIKAEPDESNARYFHVVIAGESKDSPFEGGTFKRELLLAEEYPMAAPKVRFMTKIYHPNVDKLERISLDILKDKWSPALQIRTVLLSIQALLNAPNPDDPLANDVVEQWKTNEAQAIETARAWTRLYAMNSI</sequence>
<keyword id="KW-0007">Acetylation</keyword>
<keyword id="KW-1267">Proteomics identification</keyword>
<keyword id="KW-1185">Reference proteome</keyword>
<gene>
    <name type="primary">UBE2NL</name>
</gene>
<comment type="tissue specificity">
    <text evidence="3">Expressed in epididymis (at protein level).</text>
</comment>
<comment type="similarity">
    <text evidence="2">Belongs to the ubiquitin-conjugating enzyme family.</text>
</comment>
<comment type="caution">
    <text evidence="4">Could be inactive as a ligase. The potential active site Cys residue in position 88 is replaced by a Ser.</text>
</comment>
<proteinExistence type="evidence at protein level"/>
<dbReference type="EMBL" id="GU727624">
    <property type="protein sequence ID" value="ADU87626.1"/>
    <property type="molecule type" value="mRNA"/>
</dbReference>
<dbReference type="EMBL" id="AL109622">
    <property type="protein sequence ID" value="CAB72341.1"/>
    <property type="molecule type" value="Genomic_DNA"/>
</dbReference>
<dbReference type="RefSeq" id="NP_001013007.1">
    <property type="nucleotide sequence ID" value="NM_001012989.3"/>
</dbReference>
<dbReference type="SMR" id="Q5JXB2"/>
<dbReference type="BioGRID" id="133317">
    <property type="interactions" value="15"/>
</dbReference>
<dbReference type="FunCoup" id="Q5JXB2">
    <property type="interactions" value="974"/>
</dbReference>
<dbReference type="IntAct" id="Q5JXB2">
    <property type="interactions" value="3"/>
</dbReference>
<dbReference type="iPTMnet" id="Q5JXB2"/>
<dbReference type="PhosphoSitePlus" id="Q5JXB2"/>
<dbReference type="SwissPalm" id="Q5JXB2"/>
<dbReference type="BioMuta" id="UBE2NL"/>
<dbReference type="DMDM" id="74742728"/>
<dbReference type="jPOST" id="Q5JXB2"/>
<dbReference type="MassIVE" id="Q5JXB2"/>
<dbReference type="PeptideAtlas" id="Q5JXB2"/>
<dbReference type="ProteomicsDB" id="63439"/>
<dbReference type="Pumba" id="Q5JXB2"/>
<dbReference type="DNASU" id="389898"/>
<dbReference type="Ensembl" id="ENST00000710304.1">
    <property type="protein sequence ID" value="ENSP00000518187.1"/>
    <property type="gene ID" value="ENSG00000292243.1"/>
</dbReference>
<dbReference type="GeneID" id="389898"/>
<dbReference type="KEGG" id="hsa:389898"/>
<dbReference type="MANE-Select" id="ENST00000710304.1">
    <property type="protein sequence ID" value="ENSP00000518187.1"/>
    <property type="RefSeq nucleotide sequence ID" value="NM_001012989.3"/>
    <property type="RefSeq protein sequence ID" value="NP_001013007.1"/>
</dbReference>
<dbReference type="AGR" id="HGNC:31710"/>
<dbReference type="CTD" id="389898"/>
<dbReference type="DisGeNET" id="389898"/>
<dbReference type="GeneCards" id="UBE2NL"/>
<dbReference type="HGNC" id="HGNC:31710">
    <property type="gene designation" value="UBE2NL"/>
</dbReference>
<dbReference type="neXtProt" id="NX_Q5JXB2"/>
<dbReference type="PharmGKB" id="PA134943659"/>
<dbReference type="InParanoid" id="Q5JXB2"/>
<dbReference type="OrthoDB" id="7851174at2759"/>
<dbReference type="PAN-GO" id="Q5JXB2">
    <property type="GO annotations" value="3 GO annotations based on evolutionary models"/>
</dbReference>
<dbReference type="PhylomeDB" id="Q5JXB2"/>
<dbReference type="TreeFam" id="TF101126"/>
<dbReference type="BRENDA" id="2.3.2.23">
    <property type="organism ID" value="2681"/>
</dbReference>
<dbReference type="PathwayCommons" id="Q5JXB2"/>
<dbReference type="SignaLink" id="Q5JXB2"/>
<dbReference type="SIGNOR" id="Q5JXB2"/>
<dbReference type="BioGRID-ORCS" id="389898">
    <property type="hits" value="181 hits in 578 CRISPR screens"/>
</dbReference>
<dbReference type="GenomeRNAi" id="389898"/>
<dbReference type="Pharos" id="Q5JXB2">
    <property type="development level" value="Tdark"/>
</dbReference>
<dbReference type="PRO" id="PR:Q5JXB2"/>
<dbReference type="Proteomes" id="UP000005640">
    <property type="component" value="Unplaced"/>
</dbReference>
<dbReference type="RNAct" id="Q5JXB2">
    <property type="molecule type" value="protein"/>
</dbReference>
<dbReference type="GO" id="GO:0070062">
    <property type="term" value="C:extracellular exosome"/>
    <property type="evidence" value="ECO:0007005"/>
    <property type="project" value="UniProtKB"/>
</dbReference>
<dbReference type="GO" id="GO:0005634">
    <property type="term" value="C:nucleus"/>
    <property type="evidence" value="ECO:0000318"/>
    <property type="project" value="GO_Central"/>
</dbReference>
<dbReference type="GO" id="GO:0061631">
    <property type="term" value="F:ubiquitin conjugating enzyme activity"/>
    <property type="evidence" value="ECO:0000318"/>
    <property type="project" value="GO_Central"/>
</dbReference>
<dbReference type="GO" id="GO:0000209">
    <property type="term" value="P:protein polyubiquitination"/>
    <property type="evidence" value="ECO:0000318"/>
    <property type="project" value="GO_Central"/>
</dbReference>
<dbReference type="CDD" id="cd23813">
    <property type="entry name" value="UBCc_UBE2N"/>
    <property type="match status" value="1"/>
</dbReference>
<dbReference type="FunFam" id="3.10.110.10:FF:000015">
    <property type="entry name" value="Ubiquitin-conjugating enzyme E2 N"/>
    <property type="match status" value="1"/>
</dbReference>
<dbReference type="Gene3D" id="3.10.110.10">
    <property type="entry name" value="Ubiquitin Conjugating Enzyme"/>
    <property type="match status" value="1"/>
</dbReference>
<dbReference type="InterPro" id="IPR050113">
    <property type="entry name" value="Ub_conjugating_enzyme"/>
</dbReference>
<dbReference type="InterPro" id="IPR000608">
    <property type="entry name" value="UBQ-conjugat_E2_core"/>
</dbReference>
<dbReference type="InterPro" id="IPR016135">
    <property type="entry name" value="UBQ-conjugating_enzyme/RWD"/>
</dbReference>
<dbReference type="PANTHER" id="PTHR24067">
    <property type="entry name" value="UBIQUITIN-CONJUGATING ENZYME E2"/>
    <property type="match status" value="1"/>
</dbReference>
<dbReference type="Pfam" id="PF00179">
    <property type="entry name" value="UQ_con"/>
    <property type="match status" value="1"/>
</dbReference>
<dbReference type="SMART" id="SM00212">
    <property type="entry name" value="UBCc"/>
    <property type="match status" value="1"/>
</dbReference>
<dbReference type="SUPFAM" id="SSF54495">
    <property type="entry name" value="UBC-like"/>
    <property type="match status" value="1"/>
</dbReference>
<dbReference type="PROSITE" id="PS50127">
    <property type="entry name" value="UBC_2"/>
    <property type="match status" value="1"/>
</dbReference>
<organism>
    <name type="scientific">Homo sapiens</name>
    <name type="common">Human</name>
    <dbReference type="NCBI Taxonomy" id="9606"/>
    <lineage>
        <taxon>Eukaryota</taxon>
        <taxon>Metazoa</taxon>
        <taxon>Chordata</taxon>
        <taxon>Craniata</taxon>
        <taxon>Vertebrata</taxon>
        <taxon>Euteleostomi</taxon>
        <taxon>Mammalia</taxon>
        <taxon>Eutheria</taxon>
        <taxon>Euarchontoglires</taxon>
        <taxon>Primates</taxon>
        <taxon>Haplorrhini</taxon>
        <taxon>Catarrhini</taxon>
        <taxon>Hominidae</taxon>
        <taxon>Homo</taxon>
    </lineage>
</organism>
<protein>
    <recommendedName>
        <fullName>Putative ubiquitin-conjugating enzyme E2 N-like</fullName>
    </recommendedName>
    <alternativeName>
        <fullName>Epididymis tissue protein Li 174</fullName>
    </alternativeName>
</protein>
<feature type="chain" id="PRO_0000271087" description="Putative ubiquitin-conjugating enzyme E2 N-like">
    <location>
        <begin position="1"/>
        <end position="153"/>
    </location>
</feature>
<feature type="domain" description="UBC core" evidence="2">
    <location>
        <begin position="3"/>
        <end position="150"/>
    </location>
</feature>
<feature type="modified residue" description="N6-acetyllysine" evidence="1">
    <location>
        <position position="83"/>
    </location>
</feature>
<reference key="1">
    <citation type="journal article" date="2010" name="Mol. Cell. Proteomics">
        <title>Systematic mapping and functional analysis of a family of human epididymal secretory sperm-located proteins.</title>
        <authorList>
            <person name="Li J."/>
            <person name="Liu F."/>
            <person name="Wang H."/>
            <person name="Liu X."/>
            <person name="Liu J."/>
            <person name="Li N."/>
            <person name="Wan F."/>
            <person name="Wang W."/>
            <person name="Zhang C."/>
            <person name="Jin S."/>
            <person name="Liu J."/>
            <person name="Zhu P."/>
            <person name="Liu Y."/>
        </authorList>
    </citation>
    <scope>NUCLEOTIDE SEQUENCE [MRNA]</scope>
    <scope>TISSUE SPECIFICITY</scope>
    <source>
        <tissue>Epididymis</tissue>
    </source>
</reference>
<reference key="2">
    <citation type="journal article" date="2005" name="Nature">
        <title>The DNA sequence of the human X chromosome.</title>
        <authorList>
            <person name="Ross M.T."/>
            <person name="Grafham D.V."/>
            <person name="Coffey A.J."/>
            <person name="Scherer S."/>
            <person name="McLay K."/>
            <person name="Muzny D."/>
            <person name="Platzer M."/>
            <person name="Howell G.R."/>
            <person name="Burrows C."/>
            <person name="Bird C.P."/>
            <person name="Frankish A."/>
            <person name="Lovell F.L."/>
            <person name="Howe K.L."/>
            <person name="Ashurst J.L."/>
            <person name="Fulton R.S."/>
            <person name="Sudbrak R."/>
            <person name="Wen G."/>
            <person name="Jones M.C."/>
            <person name="Hurles M.E."/>
            <person name="Andrews T.D."/>
            <person name="Scott C.E."/>
            <person name="Searle S."/>
            <person name="Ramser J."/>
            <person name="Whittaker A."/>
            <person name="Deadman R."/>
            <person name="Carter N.P."/>
            <person name="Hunt S.E."/>
            <person name="Chen R."/>
            <person name="Cree A."/>
            <person name="Gunaratne P."/>
            <person name="Havlak P."/>
            <person name="Hodgson A."/>
            <person name="Metzker M.L."/>
            <person name="Richards S."/>
            <person name="Scott G."/>
            <person name="Steffen D."/>
            <person name="Sodergren E."/>
            <person name="Wheeler D.A."/>
            <person name="Worley K.C."/>
            <person name="Ainscough R."/>
            <person name="Ambrose K.D."/>
            <person name="Ansari-Lari M.A."/>
            <person name="Aradhya S."/>
            <person name="Ashwell R.I."/>
            <person name="Babbage A.K."/>
            <person name="Bagguley C.L."/>
            <person name="Ballabio A."/>
            <person name="Banerjee R."/>
            <person name="Barker G.E."/>
            <person name="Barlow K.F."/>
            <person name="Barrett I.P."/>
            <person name="Bates K.N."/>
            <person name="Beare D.M."/>
            <person name="Beasley H."/>
            <person name="Beasley O."/>
            <person name="Beck A."/>
            <person name="Bethel G."/>
            <person name="Blechschmidt K."/>
            <person name="Brady N."/>
            <person name="Bray-Allen S."/>
            <person name="Bridgeman A.M."/>
            <person name="Brown A.J."/>
            <person name="Brown M.J."/>
            <person name="Bonnin D."/>
            <person name="Bruford E.A."/>
            <person name="Buhay C."/>
            <person name="Burch P."/>
            <person name="Burford D."/>
            <person name="Burgess J."/>
            <person name="Burrill W."/>
            <person name="Burton J."/>
            <person name="Bye J.M."/>
            <person name="Carder C."/>
            <person name="Carrel L."/>
            <person name="Chako J."/>
            <person name="Chapman J.C."/>
            <person name="Chavez D."/>
            <person name="Chen E."/>
            <person name="Chen G."/>
            <person name="Chen Y."/>
            <person name="Chen Z."/>
            <person name="Chinault C."/>
            <person name="Ciccodicola A."/>
            <person name="Clark S.Y."/>
            <person name="Clarke G."/>
            <person name="Clee C.M."/>
            <person name="Clegg S."/>
            <person name="Clerc-Blankenburg K."/>
            <person name="Clifford K."/>
            <person name="Cobley V."/>
            <person name="Cole C.G."/>
            <person name="Conquer J.S."/>
            <person name="Corby N."/>
            <person name="Connor R.E."/>
            <person name="David R."/>
            <person name="Davies J."/>
            <person name="Davis C."/>
            <person name="Davis J."/>
            <person name="Delgado O."/>
            <person name="Deshazo D."/>
            <person name="Dhami P."/>
            <person name="Ding Y."/>
            <person name="Dinh H."/>
            <person name="Dodsworth S."/>
            <person name="Draper H."/>
            <person name="Dugan-Rocha S."/>
            <person name="Dunham A."/>
            <person name="Dunn M."/>
            <person name="Durbin K.J."/>
            <person name="Dutta I."/>
            <person name="Eades T."/>
            <person name="Ellwood M."/>
            <person name="Emery-Cohen A."/>
            <person name="Errington H."/>
            <person name="Evans K.L."/>
            <person name="Faulkner L."/>
            <person name="Francis F."/>
            <person name="Frankland J."/>
            <person name="Fraser A.E."/>
            <person name="Galgoczy P."/>
            <person name="Gilbert J."/>
            <person name="Gill R."/>
            <person name="Gloeckner G."/>
            <person name="Gregory S.G."/>
            <person name="Gribble S."/>
            <person name="Griffiths C."/>
            <person name="Grocock R."/>
            <person name="Gu Y."/>
            <person name="Gwilliam R."/>
            <person name="Hamilton C."/>
            <person name="Hart E.A."/>
            <person name="Hawes A."/>
            <person name="Heath P.D."/>
            <person name="Heitmann K."/>
            <person name="Hennig S."/>
            <person name="Hernandez J."/>
            <person name="Hinzmann B."/>
            <person name="Ho S."/>
            <person name="Hoffs M."/>
            <person name="Howden P.J."/>
            <person name="Huckle E.J."/>
            <person name="Hume J."/>
            <person name="Hunt P.J."/>
            <person name="Hunt A.R."/>
            <person name="Isherwood J."/>
            <person name="Jacob L."/>
            <person name="Johnson D."/>
            <person name="Jones S."/>
            <person name="de Jong P.J."/>
            <person name="Joseph S.S."/>
            <person name="Keenan S."/>
            <person name="Kelly S."/>
            <person name="Kershaw J.K."/>
            <person name="Khan Z."/>
            <person name="Kioschis P."/>
            <person name="Klages S."/>
            <person name="Knights A.J."/>
            <person name="Kosiura A."/>
            <person name="Kovar-Smith C."/>
            <person name="Laird G.K."/>
            <person name="Langford C."/>
            <person name="Lawlor S."/>
            <person name="Leversha M."/>
            <person name="Lewis L."/>
            <person name="Liu W."/>
            <person name="Lloyd C."/>
            <person name="Lloyd D.M."/>
            <person name="Loulseged H."/>
            <person name="Loveland J.E."/>
            <person name="Lovell J.D."/>
            <person name="Lozado R."/>
            <person name="Lu J."/>
            <person name="Lyne R."/>
            <person name="Ma J."/>
            <person name="Maheshwari M."/>
            <person name="Matthews L.H."/>
            <person name="McDowall J."/>
            <person name="McLaren S."/>
            <person name="McMurray A."/>
            <person name="Meidl P."/>
            <person name="Meitinger T."/>
            <person name="Milne S."/>
            <person name="Miner G."/>
            <person name="Mistry S.L."/>
            <person name="Morgan M."/>
            <person name="Morris S."/>
            <person name="Mueller I."/>
            <person name="Mullikin J.C."/>
            <person name="Nguyen N."/>
            <person name="Nordsiek G."/>
            <person name="Nyakatura G."/>
            <person name="O'dell C.N."/>
            <person name="Okwuonu G."/>
            <person name="Palmer S."/>
            <person name="Pandian R."/>
            <person name="Parker D."/>
            <person name="Parrish J."/>
            <person name="Pasternak S."/>
            <person name="Patel D."/>
            <person name="Pearce A.V."/>
            <person name="Pearson D.M."/>
            <person name="Pelan S.E."/>
            <person name="Perez L."/>
            <person name="Porter K.M."/>
            <person name="Ramsey Y."/>
            <person name="Reichwald K."/>
            <person name="Rhodes S."/>
            <person name="Ridler K.A."/>
            <person name="Schlessinger D."/>
            <person name="Schueler M.G."/>
            <person name="Sehra H.K."/>
            <person name="Shaw-Smith C."/>
            <person name="Shen H."/>
            <person name="Sheridan E.M."/>
            <person name="Shownkeen R."/>
            <person name="Skuce C.D."/>
            <person name="Smith M.L."/>
            <person name="Sotheran E.C."/>
            <person name="Steingruber H.E."/>
            <person name="Steward C.A."/>
            <person name="Storey R."/>
            <person name="Swann R.M."/>
            <person name="Swarbreck D."/>
            <person name="Tabor P.E."/>
            <person name="Taudien S."/>
            <person name="Taylor T."/>
            <person name="Teague B."/>
            <person name="Thomas K."/>
            <person name="Thorpe A."/>
            <person name="Timms K."/>
            <person name="Tracey A."/>
            <person name="Trevanion S."/>
            <person name="Tromans A.C."/>
            <person name="d'Urso M."/>
            <person name="Verduzco D."/>
            <person name="Villasana D."/>
            <person name="Waldron L."/>
            <person name="Wall M."/>
            <person name="Wang Q."/>
            <person name="Warren J."/>
            <person name="Warry G.L."/>
            <person name="Wei X."/>
            <person name="West A."/>
            <person name="Whitehead S.L."/>
            <person name="Whiteley M.N."/>
            <person name="Wilkinson J.E."/>
            <person name="Willey D.L."/>
            <person name="Williams G."/>
            <person name="Williams L."/>
            <person name="Williamson A."/>
            <person name="Williamson H."/>
            <person name="Wilming L."/>
            <person name="Woodmansey R.L."/>
            <person name="Wray P.W."/>
            <person name="Yen J."/>
            <person name="Zhang J."/>
            <person name="Zhou J."/>
            <person name="Zoghbi H."/>
            <person name="Zorilla S."/>
            <person name="Buck D."/>
            <person name="Reinhardt R."/>
            <person name="Poustka A."/>
            <person name="Rosenthal A."/>
            <person name="Lehrach H."/>
            <person name="Meindl A."/>
            <person name="Minx P.J."/>
            <person name="Hillier L.W."/>
            <person name="Willard H.F."/>
            <person name="Wilson R.K."/>
            <person name="Waterston R.H."/>
            <person name="Rice C.M."/>
            <person name="Vaudin M."/>
            <person name="Coulson A."/>
            <person name="Nelson D.L."/>
            <person name="Weinstock G."/>
            <person name="Sulston J.E."/>
            <person name="Durbin R.M."/>
            <person name="Hubbard T."/>
            <person name="Gibbs R.A."/>
            <person name="Beck S."/>
            <person name="Rogers J."/>
            <person name="Bentley D.R."/>
        </authorList>
    </citation>
    <scope>NUCLEOTIDE SEQUENCE [LARGE SCALE GENOMIC DNA]</scope>
</reference>
<name>UE2NL_HUMAN</name>
<accession>Q5JXB2</accession>
<accession>E9KL27</accession>
<evidence type="ECO:0000250" key="1">
    <source>
        <dbReference type="UniProtKB" id="P61088"/>
    </source>
</evidence>
<evidence type="ECO:0000255" key="2">
    <source>
        <dbReference type="PROSITE-ProRule" id="PRU00388"/>
    </source>
</evidence>
<evidence type="ECO:0000269" key="3">
    <source>
    </source>
</evidence>
<evidence type="ECO:0000305" key="4"/>